<name>ADT2_BOVIN</name>
<reference key="1">
    <citation type="journal article" date="2002" name="Mitochondrion">
        <title>Structural properties of mammalian mitochondrial ADP/ATP carriers: identification of possible amino acids that determine functional differences in its isoforms.</title>
        <authorList>
            <person name="Yamazaki N."/>
            <person name="Shinohara Y."/>
            <person name="Tanida K."/>
            <person name="Terada H."/>
        </authorList>
    </citation>
    <scope>NUCLEOTIDE SEQUENCE [MRNA]</scope>
</reference>
<reference key="2">
    <citation type="submission" date="2005-08" db="EMBL/GenBank/DDBJ databases">
        <authorList>
            <consortium name="NIH - Mammalian Gene Collection (MGC) project"/>
        </authorList>
    </citation>
    <scope>NUCLEOTIDE SEQUENCE [LARGE SCALE MRNA]</scope>
    <source>
        <strain>Crossbred X Angus</strain>
        <tissue>Ileum</tissue>
    </source>
</reference>
<organism>
    <name type="scientific">Bos taurus</name>
    <name type="common">Bovine</name>
    <dbReference type="NCBI Taxonomy" id="9913"/>
    <lineage>
        <taxon>Eukaryota</taxon>
        <taxon>Metazoa</taxon>
        <taxon>Chordata</taxon>
        <taxon>Craniata</taxon>
        <taxon>Vertebrata</taxon>
        <taxon>Euteleostomi</taxon>
        <taxon>Mammalia</taxon>
        <taxon>Eutheria</taxon>
        <taxon>Laurasiatheria</taxon>
        <taxon>Artiodactyla</taxon>
        <taxon>Ruminantia</taxon>
        <taxon>Pecora</taxon>
        <taxon>Bovidae</taxon>
        <taxon>Bovinae</taxon>
        <taxon>Bos</taxon>
    </lineage>
</organism>
<keyword id="KW-0007">Acetylation</keyword>
<keyword id="KW-0050">Antiport</keyword>
<keyword id="KW-0159">Chromosome partition</keyword>
<keyword id="KW-0472">Membrane</keyword>
<keyword id="KW-0488">Methylation</keyword>
<keyword id="KW-0496">Mitochondrion</keyword>
<keyword id="KW-0999">Mitochondrion inner membrane</keyword>
<keyword id="KW-0597">Phosphoprotein</keyword>
<keyword id="KW-1185">Reference proteome</keyword>
<keyword id="KW-0677">Repeat</keyword>
<keyword id="KW-0812">Transmembrane</keyword>
<keyword id="KW-1133">Transmembrane helix</keyword>
<keyword id="KW-0813">Transport</keyword>
<gene>
    <name evidence="4" type="primary">SLC25A5</name>
    <name evidence="9" type="synonym">ANT2</name>
</gene>
<accession>Q8SQH5</accession>
<accession>Q3SZD0</accession>
<comment type="function">
    <text evidence="2 4 6">ADP:ATP antiporter that mediates import of ADP into the mitochondrial matrix for ATP synthesis, and export of ATP out to fuel the cell (By similarity). Cycles between the cytoplasmic-open state (c-state) and the matrix-open state (m-state): operates by the alternating access mechanism with a single substrate-binding site intermittently exposed to either the cytosolic (c-state) or matrix (m-state) side of the inner mitochondrial membrane (By similarity). In addition to its ADP:ATP antiporter activity, also involved in mitochondrial uncoupling and mitochondrial permeability transition pore (mPTP) activity. Plays a role in mitochondrial uncoupling by acting as a proton transporter: proton transport uncouples the proton flows via the electron transport chain and ATP synthase to reduce the efficiency of ATP production and cause mitochondrial thermogenesis. Proton transporter activity is inhibited by ADP:ATP antiporter activity, suggesting that SLC25A5/ANT2 acts as a master regulator of mitochondrial energy output by maintaining a delicate balance between ATP production (ADP:ATP antiporter activity) and thermogenesis (proton transporter activity). Proton transporter activity requires free fatty acids as cofactor, but does not transport it. Probably mediates mitochondrial uncoupling in tissues that do not express UCP1. Also plays a key role in mPTP opening, a non-specific pore that enables free passage of the mitochondrial membranes to solutes of up to 1.5 kDa, and which contributes to cell death. It is however unclear if SLC25A5/ANT2 constitutes a pore-forming component of mPTP or regulates it (By similarity). Acts as a regulator of mitophagy independently of ADP:ATP antiporter activity: promotes mitophagy via interaction with TIMM44, leading to inhibit the presequence translocase TIMM23, thereby promoting stabilization of PINK1 (By similarity). As part of the mitotic spindle-associated MMXD complex it may play a role in chromosome segregation (By similarity).</text>
</comment>
<comment type="catalytic activity">
    <reaction evidence="6">
        <text>ADP(in) + ATP(out) = ADP(out) + ATP(in)</text>
        <dbReference type="Rhea" id="RHEA:34999"/>
        <dbReference type="ChEBI" id="CHEBI:30616"/>
        <dbReference type="ChEBI" id="CHEBI:456216"/>
    </reaction>
</comment>
<comment type="catalytic activity">
    <reaction evidence="6">
        <text>H(+)(in) = H(+)(out)</text>
        <dbReference type="Rhea" id="RHEA:34979"/>
        <dbReference type="ChEBI" id="CHEBI:15378"/>
    </reaction>
</comment>
<comment type="activity regulation">
    <text evidence="2 6">The matrix-open state (m-state) is inhibited by the membrane-permeable bongkrekic acid (BKA). The cytoplasmic-open state (c-state) is inhibited by the membrane-impermeable toxic inhibitor carboxyatractyloside (CATR) (By similarity). Proton transporter activity is inhibited by ADP:ATP antiporter activity (By similarity).</text>
</comment>
<comment type="subunit">
    <text evidence="2 3 4 6">Monomer (By similarity). Component of the MMXD complex, which includes CIAO1, ERCC2, CIAO2B, MMS19 and SLC25A5/ANT2. Interacts with AK4 (By similarity). Interacts with TIMM44; leading to inhibit the presequence translocase TIMM23, thereby promoting stabilization of PINK1 (By similarity).</text>
</comment>
<comment type="subcellular location">
    <subcellularLocation>
        <location evidence="3">Mitochondrion inner membrane</location>
        <topology evidence="8">Multi-pass membrane protein</topology>
    </subcellularLocation>
    <subcellularLocation>
        <location evidence="4">Membrane</location>
        <topology evidence="8">Multi-pass membrane protein</topology>
    </subcellularLocation>
    <text evidence="4">May localize to non-mitochondrial membranes.</text>
</comment>
<comment type="domain">
    <text evidence="3">The transmembrane helices are not perpendicular to the plane of the membrane, but cross the membrane at an angle. Odd-numbered transmembrane helices exhibit a sharp kink, due to the presence of a conserved proline residue.</text>
</comment>
<comment type="PTM">
    <text evidence="4">Trimethylated by ANTKMT at Lys-52.</text>
</comment>
<comment type="similarity">
    <text evidence="10">Belongs to the mitochondrial carrier (TC 2.A.29) family.</text>
</comment>
<dbReference type="EMBL" id="AB065433">
    <property type="protein sequence ID" value="BAB84673.1"/>
    <property type="molecule type" value="mRNA"/>
</dbReference>
<dbReference type="EMBL" id="BC102950">
    <property type="protein sequence ID" value="AAI02951.1"/>
    <property type="molecule type" value="mRNA"/>
</dbReference>
<dbReference type="RefSeq" id="NP_777084.1">
    <property type="nucleotide sequence ID" value="NM_174659.1"/>
</dbReference>
<dbReference type="SMR" id="Q8SQH5"/>
<dbReference type="FunCoup" id="Q8SQH5">
    <property type="interactions" value="2067"/>
</dbReference>
<dbReference type="STRING" id="9913.ENSBTAP00000059714"/>
<dbReference type="PaxDb" id="9913-ENSBTAP00000056626"/>
<dbReference type="PeptideAtlas" id="Q8SQH5"/>
<dbReference type="GeneID" id="282479"/>
<dbReference type="KEGG" id="bta:282479"/>
<dbReference type="CTD" id="292"/>
<dbReference type="VEuPathDB" id="HostDB:ENSBTAG00000046037"/>
<dbReference type="eggNOG" id="KOG0749">
    <property type="taxonomic scope" value="Eukaryota"/>
</dbReference>
<dbReference type="HOGENOM" id="CLU_015166_12_0_1"/>
<dbReference type="InParanoid" id="Q8SQH5"/>
<dbReference type="OrthoDB" id="270584at2759"/>
<dbReference type="Reactome" id="R-BTA-83936">
    <property type="pathway name" value="Transport of nucleosides and free purine and pyrimidine bases across the plasma membrane"/>
</dbReference>
<dbReference type="Reactome" id="R-BTA-9837999">
    <property type="pathway name" value="Mitochondrial protein degradation"/>
</dbReference>
<dbReference type="Proteomes" id="UP000009136">
    <property type="component" value="Chromosome X"/>
</dbReference>
<dbReference type="Bgee" id="ENSBTAG00000046037">
    <property type="expression patterns" value="Expressed in retina and 105 other cell types or tissues"/>
</dbReference>
<dbReference type="GO" id="GO:0016020">
    <property type="term" value="C:membrane"/>
    <property type="evidence" value="ECO:0000250"/>
    <property type="project" value="UniProtKB"/>
</dbReference>
<dbReference type="GO" id="GO:0005743">
    <property type="term" value="C:mitochondrial inner membrane"/>
    <property type="evidence" value="ECO:0007669"/>
    <property type="project" value="UniProtKB-SubCell"/>
</dbReference>
<dbReference type="GO" id="GO:0005757">
    <property type="term" value="C:mitochondrial permeability transition pore complex"/>
    <property type="evidence" value="ECO:0000250"/>
    <property type="project" value="UniProtKB"/>
</dbReference>
<dbReference type="GO" id="GO:0071817">
    <property type="term" value="C:MMXD complex"/>
    <property type="evidence" value="ECO:0000250"/>
    <property type="project" value="UniProtKB"/>
</dbReference>
<dbReference type="GO" id="GO:0005471">
    <property type="term" value="F:ATP:ADP antiporter activity"/>
    <property type="evidence" value="ECO:0000250"/>
    <property type="project" value="UniProtKB"/>
</dbReference>
<dbReference type="GO" id="GO:0017077">
    <property type="term" value="F:oxidative phosphorylation uncoupler activity"/>
    <property type="evidence" value="ECO:0000250"/>
    <property type="project" value="UniProtKB"/>
</dbReference>
<dbReference type="GO" id="GO:1990845">
    <property type="term" value="P:adaptive thermogenesis"/>
    <property type="evidence" value="ECO:0000250"/>
    <property type="project" value="UniProtKB"/>
</dbReference>
<dbReference type="GO" id="GO:0030183">
    <property type="term" value="P:B cell differentiation"/>
    <property type="evidence" value="ECO:0000250"/>
    <property type="project" value="UniProtKB"/>
</dbReference>
<dbReference type="GO" id="GO:0007059">
    <property type="term" value="P:chromosome segregation"/>
    <property type="evidence" value="ECO:0007669"/>
    <property type="project" value="UniProtKB-KW"/>
</dbReference>
<dbReference type="GO" id="GO:0030218">
    <property type="term" value="P:erythrocyte differentiation"/>
    <property type="evidence" value="ECO:0000250"/>
    <property type="project" value="UniProtKB"/>
</dbReference>
<dbReference type="GO" id="GO:0140021">
    <property type="term" value="P:mitochondrial ADP transmembrane transport"/>
    <property type="evidence" value="ECO:0000250"/>
    <property type="project" value="UniProtKB"/>
</dbReference>
<dbReference type="GO" id="GO:1990544">
    <property type="term" value="P:mitochondrial ATP transmembrane transport"/>
    <property type="evidence" value="ECO:0000250"/>
    <property type="project" value="UniProtKB"/>
</dbReference>
<dbReference type="GO" id="GO:1901029">
    <property type="term" value="P:negative regulation of mitochondrial outer membrane permeabilization involved in apoptotic signaling pathway"/>
    <property type="evidence" value="ECO:0000250"/>
    <property type="project" value="UniProtKB"/>
</dbReference>
<dbReference type="GO" id="GO:0008284">
    <property type="term" value="P:positive regulation of cell population proliferation"/>
    <property type="evidence" value="ECO:0000250"/>
    <property type="project" value="UniProtKB"/>
</dbReference>
<dbReference type="GO" id="GO:1901526">
    <property type="term" value="P:positive regulation of mitophagy"/>
    <property type="evidence" value="ECO:0000250"/>
    <property type="project" value="UniProtKB"/>
</dbReference>
<dbReference type="GO" id="GO:0046902">
    <property type="term" value="P:regulation of mitochondrial membrane permeability"/>
    <property type="evidence" value="ECO:0000250"/>
    <property type="project" value="UniProtKB"/>
</dbReference>
<dbReference type="FunFam" id="1.50.40.10:FF:000002">
    <property type="entry name" value="Putative ADP/ATP translocase 2-like"/>
    <property type="match status" value="1"/>
</dbReference>
<dbReference type="Gene3D" id="1.50.40.10">
    <property type="entry name" value="Mitochondrial carrier domain"/>
    <property type="match status" value="1"/>
</dbReference>
<dbReference type="InterPro" id="IPR002113">
    <property type="entry name" value="ADT_euk_type"/>
</dbReference>
<dbReference type="InterPro" id="IPR002067">
    <property type="entry name" value="Mit_carrier"/>
</dbReference>
<dbReference type="InterPro" id="IPR018108">
    <property type="entry name" value="Mitochondrial_sb/sol_carrier"/>
</dbReference>
<dbReference type="InterPro" id="IPR023395">
    <property type="entry name" value="Mt_carrier_dom_sf"/>
</dbReference>
<dbReference type="PANTHER" id="PTHR45635">
    <property type="entry name" value="ADP,ATP CARRIER PROTEIN 1-RELATED-RELATED"/>
    <property type="match status" value="1"/>
</dbReference>
<dbReference type="PANTHER" id="PTHR45635:SF3">
    <property type="entry name" value="ADP_ATP TRANSLOCASE 2"/>
    <property type="match status" value="1"/>
</dbReference>
<dbReference type="Pfam" id="PF00153">
    <property type="entry name" value="Mito_carr"/>
    <property type="match status" value="3"/>
</dbReference>
<dbReference type="PRINTS" id="PR00927">
    <property type="entry name" value="ADPTRNSLCASE"/>
</dbReference>
<dbReference type="PRINTS" id="PR00926">
    <property type="entry name" value="MITOCARRIER"/>
</dbReference>
<dbReference type="SUPFAM" id="SSF103506">
    <property type="entry name" value="Mitochondrial carrier"/>
    <property type="match status" value="1"/>
</dbReference>
<dbReference type="PROSITE" id="PS50920">
    <property type="entry name" value="SOLCAR"/>
    <property type="match status" value="3"/>
</dbReference>
<protein>
    <recommendedName>
        <fullName evidence="10">ADP/ATP translocase 2</fullName>
    </recommendedName>
    <alternativeName>
        <fullName evidence="9">ADP,ATP carrier protein 2</fullName>
    </alternativeName>
    <alternativeName>
        <fullName evidence="9">Adenine nucleotide translocator 2</fullName>
        <shortName evidence="9">ANT 2</shortName>
    </alternativeName>
    <alternativeName>
        <fullName evidence="10">Solute carrier family 25 member 5</fullName>
    </alternativeName>
    <component>
        <recommendedName>
            <fullName>ADP/ATP translocase 2, N-terminally processed</fullName>
        </recommendedName>
    </component>
</protein>
<sequence>MTDAAVSFAKDFLAGGVAAAISKTAVAPIERVKLLLQVQHASKQITADKQYKGIIDCVVRIPKEQGVLSFWRGNLANVIRYFPTQALNFAFKDKYKQIFLGGVDKRTQFWRYFAGNLASGGAAGATSLCFVYPLDFARTRLAADVGKAGAEREFRGLGDCLVKIYKSDGIRGLYQGFNVSVQGIIIYRAAYFGIYDTAKGMLPDPKNTHIFISWMIAQSVTAVAGLTSYPFDTVRRRMMMQSGRKGTDIMYTGTLDCWRKIARDEGAKAFFKGAWSNVLRGMGGAFVLVLYDEIKKFT</sequence>
<feature type="chain" id="PRO_0000423219" description="ADP/ATP translocase 2">
    <location>
        <begin position="1"/>
        <end position="298"/>
    </location>
</feature>
<feature type="initiator methionine" description="Removed; alternate" evidence="4">
    <location>
        <position position="1"/>
    </location>
</feature>
<feature type="chain" id="PRO_0000090578" description="ADP/ATP translocase 2, N-terminally processed">
    <location>
        <begin position="2"/>
        <end position="298"/>
    </location>
</feature>
<feature type="topological domain" description="Mitochondrial intermembrane" evidence="10">
    <location>
        <begin position="1"/>
        <end position="7"/>
    </location>
</feature>
<feature type="transmembrane region" description="Helical; Name=1" evidence="3">
    <location>
        <begin position="8"/>
        <end position="37"/>
    </location>
</feature>
<feature type="topological domain" description="Mitochondrial matrix" evidence="10">
    <location>
        <begin position="38"/>
        <end position="74"/>
    </location>
</feature>
<feature type="transmembrane region" description="Helical; Name=2" evidence="3">
    <location>
        <begin position="75"/>
        <end position="99"/>
    </location>
</feature>
<feature type="topological domain" description="Mitochondrial intermembrane" evidence="10">
    <location>
        <begin position="100"/>
        <end position="109"/>
    </location>
</feature>
<feature type="transmembrane region" description="Helical; Name=3" evidence="3">
    <location>
        <begin position="110"/>
        <end position="130"/>
    </location>
</feature>
<feature type="topological domain" description="Mitochondrial matrix" evidence="10">
    <location>
        <begin position="131"/>
        <end position="178"/>
    </location>
</feature>
<feature type="transmembrane region" description="Helical; Name=4" evidence="3">
    <location>
        <begin position="179"/>
        <end position="199"/>
    </location>
</feature>
<feature type="topological domain" description="Mitochondrial intermembrane" evidence="10">
    <location>
        <begin position="200"/>
        <end position="210"/>
    </location>
</feature>
<feature type="transmembrane region" description="Helical; Name=5" evidence="3">
    <location>
        <begin position="211"/>
        <end position="231"/>
    </location>
</feature>
<feature type="topological domain" description="Mitochondrial matrix" evidence="10">
    <location>
        <begin position="232"/>
        <end position="273"/>
    </location>
</feature>
<feature type="transmembrane region" description="Helical; Name=6" evidence="3">
    <location>
        <begin position="274"/>
        <end position="291"/>
    </location>
</feature>
<feature type="topological domain" description="Mitochondrial intermembrane" evidence="10">
    <location>
        <begin position="292"/>
        <end position="298"/>
    </location>
</feature>
<feature type="repeat" description="Solcar 1">
    <location>
        <begin position="6"/>
        <end position="98"/>
    </location>
</feature>
<feature type="repeat" description="Solcar 2">
    <location>
        <begin position="111"/>
        <end position="201"/>
    </location>
</feature>
<feature type="repeat" description="Solcar 3">
    <location>
        <begin position="212"/>
        <end position="297"/>
    </location>
</feature>
<feature type="region of interest" description="Important for transport activity" evidence="5">
    <location>
        <begin position="235"/>
        <end position="240"/>
    </location>
</feature>
<feature type="short sequence motif" description="Nucleotide carrier signature motif" evidence="3">
    <location>
        <begin position="235"/>
        <end position="240"/>
    </location>
</feature>
<feature type="binding site" evidence="3">
    <location>
        <position position="80"/>
    </location>
    <ligand>
        <name>ADP</name>
        <dbReference type="ChEBI" id="CHEBI:456216"/>
    </ligand>
</feature>
<feature type="binding site" evidence="3">
    <location>
        <position position="92"/>
    </location>
    <ligand>
        <name>ADP</name>
        <dbReference type="ChEBI" id="CHEBI:456216"/>
    </ligand>
</feature>
<feature type="binding site" evidence="3">
    <location>
        <position position="235"/>
    </location>
    <ligand>
        <name>ADP</name>
        <dbReference type="ChEBI" id="CHEBI:456216"/>
    </ligand>
</feature>
<feature type="modified residue" description="N-acetylmethionine" evidence="4">
    <location>
        <position position="1"/>
    </location>
</feature>
<feature type="modified residue" description="N-acetylthreonine; in ADP/ATP translocase 2, N-terminally processed" evidence="4">
    <location>
        <position position="2"/>
    </location>
</feature>
<feature type="modified residue" description="Phosphoserine" evidence="7">
    <location>
        <position position="7"/>
    </location>
</feature>
<feature type="modified residue" description="N6-malonyllysine" evidence="1">
    <location>
        <position position="23"/>
    </location>
</feature>
<feature type="modified residue" description="N6-succinyllysine" evidence="6">
    <location>
        <position position="43"/>
    </location>
</feature>
<feature type="modified residue" description="N6,N6,N6-trimethyllysine; alternate" evidence="4">
    <location>
        <position position="52"/>
    </location>
</feature>
<feature type="modified residue" description="N6,N6-dimethyllysine; alternate" evidence="4">
    <location>
        <position position="52"/>
    </location>
</feature>
<feature type="modified residue" description="N6-methyllysine; alternate" evidence="4">
    <location>
        <position position="52"/>
    </location>
</feature>
<feature type="modified residue" description="N6-malonyllysine" evidence="1">
    <location>
        <position position="92"/>
    </location>
</feature>
<feature type="modified residue" description="N6-malonyllysine" evidence="1">
    <location>
        <position position="96"/>
    </location>
</feature>
<feature type="modified residue" description="N6-acetyllysine; alternate" evidence="4">
    <location>
        <position position="105"/>
    </location>
</feature>
<feature type="modified residue" description="N6-succinyllysine; alternate" evidence="6">
    <location>
        <position position="105"/>
    </location>
</feature>
<feature type="modified residue" description="N6-acetyllysine; alternate" evidence="6">
    <location>
        <position position="147"/>
    </location>
</feature>
<feature type="modified residue" description="N6-malonyllysine; alternate" evidence="1">
    <location>
        <position position="147"/>
    </location>
</feature>
<feature type="modified residue" description="N6-methyllysine; alternate" evidence="4">
    <location>
        <position position="147"/>
    </location>
</feature>
<feature type="modified residue" description="N6-succinyllysine; alternate" evidence="6">
    <location>
        <position position="147"/>
    </location>
</feature>
<feature type="modified residue" description="N6-acetyllysine" evidence="4">
    <location>
        <position position="163"/>
    </location>
</feature>
<feature type="modified residue" description="N6-acetyllysine" evidence="6">
    <location>
        <position position="166"/>
    </location>
</feature>
<feature type="modified residue" description="N6-acetyllysine; alternate" evidence="6">
    <location>
        <position position="268"/>
    </location>
</feature>
<feature type="modified residue" description="N6-succinyllysine; alternate" evidence="6">
    <location>
        <position position="268"/>
    </location>
</feature>
<proteinExistence type="evidence at transcript level"/>
<evidence type="ECO:0000250" key="1"/>
<evidence type="ECO:0000250" key="2">
    <source>
        <dbReference type="UniProtKB" id="G2QNH0"/>
    </source>
</evidence>
<evidence type="ECO:0000250" key="3">
    <source>
        <dbReference type="UniProtKB" id="P02722"/>
    </source>
</evidence>
<evidence type="ECO:0000250" key="4">
    <source>
        <dbReference type="UniProtKB" id="P05141"/>
    </source>
</evidence>
<evidence type="ECO:0000250" key="5">
    <source>
        <dbReference type="UniProtKB" id="P12235"/>
    </source>
</evidence>
<evidence type="ECO:0000250" key="6">
    <source>
        <dbReference type="UniProtKB" id="P51881"/>
    </source>
</evidence>
<evidence type="ECO:0000250" key="7">
    <source>
        <dbReference type="UniProtKB" id="Q09073"/>
    </source>
</evidence>
<evidence type="ECO:0000255" key="8"/>
<evidence type="ECO:0000303" key="9">
    <source>
    </source>
</evidence>
<evidence type="ECO:0000305" key="10"/>